<organism>
    <name type="scientific">Saccharomyces cerevisiae (strain Lalvin EC1118 / Prise de mousse)</name>
    <name type="common">Baker's yeast</name>
    <dbReference type="NCBI Taxonomy" id="643680"/>
    <lineage>
        <taxon>Eukaryota</taxon>
        <taxon>Fungi</taxon>
        <taxon>Dikarya</taxon>
        <taxon>Ascomycota</taxon>
        <taxon>Saccharomycotina</taxon>
        <taxon>Saccharomycetes</taxon>
        <taxon>Saccharomycetales</taxon>
        <taxon>Saccharomycetaceae</taxon>
        <taxon>Saccharomyces</taxon>
    </lineage>
</organism>
<gene>
    <name type="ORF">EC1118_1N9_3125g</name>
</gene>
<proteinExistence type="inferred from homology"/>
<keyword id="KW-0472">Membrane</keyword>
<keyword id="KW-0597">Phosphoprotein</keyword>
<keyword id="KW-0812">Transmembrane</keyword>
<keyword id="KW-1133">Transmembrane helix</keyword>
<keyword id="KW-0926">Vacuole</keyword>
<name>YNF8_YEAS8</name>
<evidence type="ECO:0000250" key="1"/>
<evidence type="ECO:0000250" key="2">
    <source>
        <dbReference type="UniProtKB" id="P53947"/>
    </source>
</evidence>
<evidence type="ECO:0000255" key="3"/>
<evidence type="ECO:0000256" key="4">
    <source>
        <dbReference type="SAM" id="MobiDB-lite"/>
    </source>
</evidence>
<evidence type="ECO:0000305" key="5"/>
<comment type="subcellular location">
    <subcellularLocation>
        <location evidence="1">Vacuole membrane</location>
        <topology evidence="1">Single-pass membrane protein</topology>
    </subcellularLocation>
</comment>
<comment type="similarity">
    <text evidence="5">Belongs to the PRM5 family.</text>
</comment>
<dbReference type="EMBL" id="FN393086">
    <property type="protein sequence ID" value="CAY82543.1"/>
    <property type="molecule type" value="Genomic_DNA"/>
</dbReference>
<dbReference type="HOGENOM" id="CLU_061224_0_0_1"/>
<dbReference type="OrthoDB" id="38581at4893"/>
<dbReference type="Proteomes" id="UP000000286">
    <property type="component" value="Chromosome XIV, Scaffold EC1118_1N9"/>
</dbReference>
<dbReference type="GO" id="GO:0005935">
    <property type="term" value="C:cellular bud neck"/>
    <property type="evidence" value="ECO:0007669"/>
    <property type="project" value="TreeGrafter"/>
</dbReference>
<dbReference type="GO" id="GO:0000324">
    <property type="term" value="C:fungal-type vacuole"/>
    <property type="evidence" value="ECO:0007669"/>
    <property type="project" value="TreeGrafter"/>
</dbReference>
<dbReference type="GO" id="GO:0005774">
    <property type="term" value="C:vacuolar membrane"/>
    <property type="evidence" value="ECO:0007669"/>
    <property type="project" value="UniProtKB-SubCell"/>
</dbReference>
<dbReference type="InterPro" id="IPR051009">
    <property type="entry name" value="PRM"/>
</dbReference>
<dbReference type="PANTHER" id="PTHR36089">
    <property type="entry name" value="CHITIN SYNTHASE 3 COMPLEX PROTEIN CSI2-RELATED"/>
    <property type="match status" value="1"/>
</dbReference>
<dbReference type="PANTHER" id="PTHR36089:SF1">
    <property type="entry name" value="CHITIN SYNTHASE 3 COMPLEX PROTEIN CSI2-RELATED"/>
    <property type="match status" value="1"/>
</dbReference>
<accession>C8ZGH0</accession>
<reference key="1">
    <citation type="journal article" date="2009" name="Proc. Natl. Acad. Sci. U.S.A.">
        <title>Eukaryote-to-eukaryote gene transfer events revealed by the genome sequence of the wine yeast Saccharomyces cerevisiae EC1118.</title>
        <authorList>
            <person name="Novo M."/>
            <person name="Bigey F."/>
            <person name="Beyne E."/>
            <person name="Galeote V."/>
            <person name="Gavory F."/>
            <person name="Mallet S."/>
            <person name="Cambon B."/>
            <person name="Legras J.-L."/>
            <person name="Wincker P."/>
            <person name="Casaregola S."/>
            <person name="Dequin S."/>
        </authorList>
    </citation>
    <scope>NUCLEOTIDE SEQUENCE [LARGE SCALE GENOMIC DNA]</scope>
    <source>
        <strain>Lalvin EC1118 / Prise de mousse</strain>
    </source>
</reference>
<protein>
    <recommendedName>
        <fullName>Vacuolar membrane protein EC1118_1N9_3125g</fullName>
    </recommendedName>
</protein>
<feature type="chain" id="PRO_0000409323" description="Vacuolar membrane protein EC1118_1N9_3125g">
    <location>
        <begin position="1"/>
        <end position="314"/>
    </location>
</feature>
<feature type="transmembrane region" description="Helical" evidence="3">
    <location>
        <begin position="93"/>
        <end position="113"/>
    </location>
</feature>
<feature type="region of interest" description="Disordered" evidence="4">
    <location>
        <begin position="32"/>
        <end position="60"/>
    </location>
</feature>
<feature type="region of interest" description="Disordered" evidence="4">
    <location>
        <begin position="240"/>
        <end position="309"/>
    </location>
</feature>
<feature type="compositionally biased region" description="Basic and acidic residues" evidence="4">
    <location>
        <begin position="254"/>
        <end position="269"/>
    </location>
</feature>
<feature type="modified residue" description="Phosphoserine" evidence="2">
    <location>
        <position position="148"/>
    </location>
</feature>
<feature type="modified residue" description="Phosphoserine" evidence="2">
    <location>
        <position position="254"/>
    </location>
</feature>
<feature type="modified residue" description="Phosphoserine" evidence="2">
    <location>
        <position position="274"/>
    </location>
</feature>
<sequence>MVKKNFIPSVSLVRRDLPTLVTTTTSSTALSKPTSSVVSETSSKSLPSLTSSAFSTSSGATSSSSLIVASITPPSTAGNPFILNAADKPNGTVYIAVGAVIGAIFISILIWWLVSSYLSRRFTMTNSYANDSKNLYRGHHKHSSSLQSNPFDINDEKSYMQDDWDSMSQLESSQYEDAASPFNPIQDPFTDSRRSLFISPTLQVSQYEKSHSRHQSKDTNIFIDDPSLYVGTYLEEEEEEERKLNLNRPQRAASPERKEKKINSMEGYHKRNQSSLGLIPVASATSNTSSPKKAHKRQAPSMFLDDVLNGREII</sequence>